<dbReference type="EMBL" id="CR382122">
    <property type="protein sequence ID" value="CAH02053.1"/>
    <property type="molecule type" value="Genomic_DNA"/>
</dbReference>
<dbReference type="RefSeq" id="XP_451660.1">
    <property type="nucleotide sequence ID" value="XM_451660.1"/>
</dbReference>
<dbReference type="SMR" id="Q6CWM9"/>
<dbReference type="FunCoup" id="Q6CWM9">
    <property type="interactions" value="26"/>
</dbReference>
<dbReference type="STRING" id="284590.Q6CWM9"/>
<dbReference type="PaxDb" id="284590-Q6CWM9"/>
<dbReference type="KEGG" id="kla:KLLA0_B02871g"/>
<dbReference type="eggNOG" id="ENOG502S787">
    <property type="taxonomic scope" value="Eukaryota"/>
</dbReference>
<dbReference type="HOGENOM" id="CLU_150164_0_0_1"/>
<dbReference type="InParanoid" id="Q6CWM9"/>
<dbReference type="OMA" id="IEANHAY"/>
<dbReference type="Proteomes" id="UP000000598">
    <property type="component" value="Chromosome B"/>
</dbReference>
<dbReference type="GO" id="GO:0005768">
    <property type="term" value="C:endosome"/>
    <property type="evidence" value="ECO:0007669"/>
    <property type="project" value="UniProtKB-SubCell"/>
</dbReference>
<evidence type="ECO:0000250" key="1"/>
<evidence type="ECO:0000305" key="2"/>
<protein>
    <recommendedName>
        <fullName>Biogenesis of lysosome-related organelles complex 1 subunit BLS1</fullName>
        <shortName>BLOC-1 subunit BLS1</shortName>
    </recommendedName>
    <alternativeName>
        <fullName>BLOS1-homolog</fullName>
    </alternativeName>
</protein>
<gene>
    <name type="primary">BLS1</name>
    <name type="ordered locus">KLLA0B02871g</name>
</gene>
<name>BL1S1_KLULA</name>
<organism>
    <name type="scientific">Kluyveromyces lactis (strain ATCC 8585 / CBS 2359 / DSM 70799 / NBRC 1267 / NRRL Y-1140 / WM37)</name>
    <name type="common">Yeast</name>
    <name type="synonym">Candida sphaerica</name>
    <dbReference type="NCBI Taxonomy" id="284590"/>
    <lineage>
        <taxon>Eukaryota</taxon>
        <taxon>Fungi</taxon>
        <taxon>Dikarya</taxon>
        <taxon>Ascomycota</taxon>
        <taxon>Saccharomycotina</taxon>
        <taxon>Saccharomycetes</taxon>
        <taxon>Saccharomycetales</taxon>
        <taxon>Saccharomycetaceae</taxon>
        <taxon>Kluyveromyces</taxon>
    </lineage>
</organism>
<feature type="chain" id="PRO_0000410630" description="Biogenesis of lysosome-related organelles complex 1 subunit BLS1">
    <location>
        <begin position="1"/>
        <end position="104"/>
    </location>
</feature>
<keyword id="KW-0967">Endosome</keyword>
<keyword id="KW-1185">Reference proteome</keyword>
<keyword id="KW-0813">Transport</keyword>
<sequence length="104" mass="12052">MMSNERTLLNQLIKSKTDTVGSEILKEIEGNDEYIKDVQLKKLKELHDKKFKEKGVTPLIRLYEKYNACALNDGDLQNWAELIDRDIRILEGTIKILEDESNEG</sequence>
<comment type="function">
    <text evidence="1">Component of the biogenesis of lysosome-related organelles complex-1 (BLOC-1), a complex involved in endosomal cargo sorting.</text>
</comment>
<comment type="subunit">
    <text evidence="1">Component of the biogenesis of lysosome-related organelles complex-1 (BLOC-1).</text>
</comment>
<comment type="subcellular location">
    <subcellularLocation>
        <location evidence="1">Endosome</location>
    </subcellularLocation>
</comment>
<comment type="similarity">
    <text evidence="2">Belongs to the BLOC1S1 family.</text>
</comment>
<reference key="1">
    <citation type="journal article" date="2004" name="Nature">
        <title>Genome evolution in yeasts.</title>
        <authorList>
            <person name="Dujon B."/>
            <person name="Sherman D."/>
            <person name="Fischer G."/>
            <person name="Durrens P."/>
            <person name="Casaregola S."/>
            <person name="Lafontaine I."/>
            <person name="de Montigny J."/>
            <person name="Marck C."/>
            <person name="Neuveglise C."/>
            <person name="Talla E."/>
            <person name="Goffard N."/>
            <person name="Frangeul L."/>
            <person name="Aigle M."/>
            <person name="Anthouard V."/>
            <person name="Babour A."/>
            <person name="Barbe V."/>
            <person name="Barnay S."/>
            <person name="Blanchin S."/>
            <person name="Beckerich J.-M."/>
            <person name="Beyne E."/>
            <person name="Bleykasten C."/>
            <person name="Boisrame A."/>
            <person name="Boyer J."/>
            <person name="Cattolico L."/>
            <person name="Confanioleri F."/>
            <person name="de Daruvar A."/>
            <person name="Despons L."/>
            <person name="Fabre E."/>
            <person name="Fairhead C."/>
            <person name="Ferry-Dumazet H."/>
            <person name="Groppi A."/>
            <person name="Hantraye F."/>
            <person name="Hennequin C."/>
            <person name="Jauniaux N."/>
            <person name="Joyet P."/>
            <person name="Kachouri R."/>
            <person name="Kerrest A."/>
            <person name="Koszul R."/>
            <person name="Lemaire M."/>
            <person name="Lesur I."/>
            <person name="Ma L."/>
            <person name="Muller H."/>
            <person name="Nicaud J.-M."/>
            <person name="Nikolski M."/>
            <person name="Oztas S."/>
            <person name="Ozier-Kalogeropoulos O."/>
            <person name="Pellenz S."/>
            <person name="Potier S."/>
            <person name="Richard G.-F."/>
            <person name="Straub M.-L."/>
            <person name="Suleau A."/>
            <person name="Swennen D."/>
            <person name="Tekaia F."/>
            <person name="Wesolowski-Louvel M."/>
            <person name="Westhof E."/>
            <person name="Wirth B."/>
            <person name="Zeniou-Meyer M."/>
            <person name="Zivanovic Y."/>
            <person name="Bolotin-Fukuhara M."/>
            <person name="Thierry A."/>
            <person name="Bouchier C."/>
            <person name="Caudron B."/>
            <person name="Scarpelli C."/>
            <person name="Gaillardin C."/>
            <person name="Weissenbach J."/>
            <person name="Wincker P."/>
            <person name="Souciet J.-L."/>
        </authorList>
    </citation>
    <scope>NUCLEOTIDE SEQUENCE [LARGE SCALE GENOMIC DNA]</scope>
    <source>
        <strain>ATCC 8585 / CBS 2359 / DSM 70799 / NBRC 1267 / NRRL Y-1140 / WM37</strain>
    </source>
</reference>
<proteinExistence type="inferred from homology"/>
<accession>Q6CWM9</accession>